<proteinExistence type="inferred from homology"/>
<dbReference type="EMBL" id="CP001172">
    <property type="protein sequence ID" value="ACJ56259.1"/>
    <property type="molecule type" value="Genomic_DNA"/>
</dbReference>
<dbReference type="RefSeq" id="WP_000880863.1">
    <property type="nucleotide sequence ID" value="NZ_CP001172.1"/>
</dbReference>
<dbReference type="HOGENOM" id="CLU_125889_0_0_6"/>
<dbReference type="Proteomes" id="UP000006924">
    <property type="component" value="Chromosome"/>
</dbReference>
<dbReference type="GO" id="GO:0005886">
    <property type="term" value="C:plasma membrane"/>
    <property type="evidence" value="ECO:0007669"/>
    <property type="project" value="UniProtKB-SubCell"/>
</dbReference>
<dbReference type="HAMAP" id="MF_01874">
    <property type="entry name" value="UPF0756"/>
    <property type="match status" value="1"/>
</dbReference>
<dbReference type="InterPro" id="IPR007382">
    <property type="entry name" value="UPF0756_TM"/>
</dbReference>
<dbReference type="PANTHER" id="PTHR38452">
    <property type="entry name" value="UPF0756 MEMBRANE PROTEIN YEAL"/>
    <property type="match status" value="1"/>
</dbReference>
<dbReference type="PANTHER" id="PTHR38452:SF1">
    <property type="entry name" value="UPF0756 MEMBRANE PROTEIN YEAL"/>
    <property type="match status" value="1"/>
</dbReference>
<dbReference type="Pfam" id="PF04284">
    <property type="entry name" value="DUF441"/>
    <property type="match status" value="1"/>
</dbReference>
<name>Y1344_ACIB3</name>
<accession>B7H133</accession>
<evidence type="ECO:0000255" key="1">
    <source>
        <dbReference type="HAMAP-Rule" id="MF_01874"/>
    </source>
</evidence>
<gene>
    <name type="ordered locus">ABBFA_001344</name>
</gene>
<organism>
    <name type="scientific">Acinetobacter baumannii (strain AB307-0294)</name>
    <dbReference type="NCBI Taxonomy" id="557600"/>
    <lineage>
        <taxon>Bacteria</taxon>
        <taxon>Pseudomonadati</taxon>
        <taxon>Pseudomonadota</taxon>
        <taxon>Gammaproteobacteria</taxon>
        <taxon>Moraxellales</taxon>
        <taxon>Moraxellaceae</taxon>
        <taxon>Acinetobacter</taxon>
        <taxon>Acinetobacter calcoaceticus/baumannii complex</taxon>
    </lineage>
</organism>
<protein>
    <recommendedName>
        <fullName evidence="1">UPF0756 membrane protein ABBFA_001344</fullName>
    </recommendedName>
</protein>
<feature type="chain" id="PRO_0000388806" description="UPF0756 membrane protein ABBFA_001344">
    <location>
        <begin position="1"/>
        <end position="150"/>
    </location>
</feature>
<feature type="transmembrane region" description="Helical" evidence="1">
    <location>
        <begin position="1"/>
        <end position="21"/>
    </location>
</feature>
<feature type="transmembrane region" description="Helical" evidence="1">
    <location>
        <begin position="45"/>
        <end position="65"/>
    </location>
</feature>
<feature type="transmembrane region" description="Helical" evidence="1">
    <location>
        <begin position="83"/>
        <end position="103"/>
    </location>
</feature>
<feature type="transmembrane region" description="Helical" evidence="1">
    <location>
        <begin position="115"/>
        <end position="135"/>
    </location>
</feature>
<comment type="subcellular location">
    <subcellularLocation>
        <location evidence="1">Cell membrane</location>
        <topology evidence="1">Multi-pass membrane protein</topology>
    </subcellularLocation>
</comment>
<comment type="similarity">
    <text evidence="1">Belongs to the UPF0756 family.</text>
</comment>
<reference key="1">
    <citation type="journal article" date="2008" name="J. Bacteriol.">
        <title>Comparative genome sequence analysis of multidrug-resistant Acinetobacter baumannii.</title>
        <authorList>
            <person name="Adams M.D."/>
            <person name="Goglin K."/>
            <person name="Molyneaux N."/>
            <person name="Hujer K.M."/>
            <person name="Lavender H."/>
            <person name="Jamison J.J."/>
            <person name="MacDonald I.J."/>
            <person name="Martin K.M."/>
            <person name="Russo T."/>
            <person name="Campagnari A.A."/>
            <person name="Hujer A.M."/>
            <person name="Bonomo R.A."/>
            <person name="Gill S.R."/>
        </authorList>
    </citation>
    <scope>NUCLEOTIDE SEQUENCE [LARGE SCALE GENOMIC DNA]</scope>
    <source>
        <strain>AB307-0294</strain>
    </source>
</reference>
<sequence length="150" mass="15347">MLAQFDVNLVVLLVLLICGLLSQNAAVTIAAGVLIVIKITPLNQFFPYIQAHGLNLGILILTIGVLTPIASGKLSGESILKSFISFKSLVAIAIGLLVAWLGGRGVKLMSSQPDVVAGLLIGTVAGVALLRGVPVGPLIAAGLLSLFIGK</sequence>
<keyword id="KW-1003">Cell membrane</keyword>
<keyword id="KW-0472">Membrane</keyword>
<keyword id="KW-0812">Transmembrane</keyword>
<keyword id="KW-1133">Transmembrane helix</keyword>